<protein>
    <recommendedName>
        <fullName>Protein tantalus</fullName>
    </recommendedName>
</protein>
<keyword id="KW-0158">Chromosome</keyword>
<keyword id="KW-0963">Cytoplasm</keyword>
<keyword id="KW-0217">Developmental protein</keyword>
<keyword id="KW-0238">DNA-binding</keyword>
<keyword id="KW-0539">Nucleus</keyword>
<keyword id="KW-0597">Phosphoprotein</keyword>
<keyword id="KW-1185">Reference proteome</keyword>
<sequence length="299" mass="33766">MDNIVYDFAKITFQAKDNRSPTTNSNLSWQLNQMALSDMEEMQDTSEPIAPPESDDNVSSESHDSDDVDSQLSRCEDNDDDSDCISGSSRRSSTFGARAGVARRRMPARVSKDNFNRICSAIMKPIKKKQRKELNTNAQTLKSIEKIYTSRRMKKFTPTNLETIFEEPSDENAADAEDDSEECSISSQVKVVKVWGRKLRRAISFSDGLNKNKILSKRRRQKVKKTFGKRFALKKISMTEFHDRLNKSFDSAMLEGDDAEAGGSAEAVNIPKTSMTMEDIQLPTMSSQHQFLMQPAGFE</sequence>
<name>TANT_DROME</name>
<proteinExistence type="evidence at protein level"/>
<accession>Q8T0D4</accession>
<accession>Q9NHW6</accession>
<accession>Q9VRT0</accession>
<evidence type="ECO:0000256" key="1">
    <source>
        <dbReference type="SAM" id="MobiDB-lite"/>
    </source>
</evidence>
<evidence type="ECO:0000269" key="2">
    <source>
    </source>
</evidence>
<evidence type="ECO:0000269" key="3">
    <source>
    </source>
</evidence>
<evidence type="ECO:0000305" key="4"/>
<evidence type="ECO:0000312" key="5">
    <source>
        <dbReference type="FlyBase" id="FBgn0028980"/>
    </source>
</evidence>
<comment type="function">
    <text evidence="2">Potential cofactor involved in sensory organ development. Despite its interaction with the Polycomb group protein Asx, it does not regulate the expression of homeotic genes.</text>
</comment>
<comment type="subunit">
    <text evidence="2">Binds to DNA in vitro. Interacts directly with Asx.</text>
</comment>
<comment type="interaction">
    <interactant intactId="EBI-139891">
        <id>Q8T0D4</id>
    </interactant>
    <interactant intactId="EBI-103394">
        <id>Q9V727</id>
        <label>Asx</label>
    </interactant>
    <organismsDiffer>false</organismsDiffer>
    <experiments>3</experiments>
</comment>
<comment type="interaction">
    <interactant intactId="EBI-139891">
        <id>Q8T0D4</id>
    </interactant>
    <interactant intactId="EBI-103072">
        <id>Q9VB23</id>
        <label>wdb</label>
    </interactant>
    <organismsDiffer>false</organismsDiffer>
    <experiments>3</experiments>
</comment>
<comment type="subcellular location">
    <subcellularLocation>
        <location evidence="2">Nucleus</location>
    </subcellularLocation>
    <subcellularLocation>
        <location evidence="2">Cytoplasm</location>
    </subcellularLocation>
    <subcellularLocation>
        <location evidence="2">Chromosome</location>
    </subcellularLocation>
    <text>In embryos, it is predominantly cytoplasmic. In third instar larvae, it is predominantly nuclear or cytoplasmic depending on tissues. Colocalizes with Asx on many binding sites on polytene chromosomes, but does not bind to homeotic genes loci.</text>
</comment>
<comment type="tissue specificity">
    <text evidence="2">Ubiquitously expressed in precellularized embryos. Then it decreases at cellular blastoderm to increase again during germ band extension. During germ band extension, it is highly expressed in somatic and visceral mesoderm. Ubiquitously expressed in imaginal disks. In ovary, it is expressed from stage 10.</text>
</comment>
<comment type="developmental stage">
    <text evidence="2">Expressed both maternally and zygotically.</text>
</comment>
<feature type="chain" id="PRO_0000072429" description="Protein tantalus">
    <location>
        <begin position="1"/>
        <end position="299"/>
    </location>
</feature>
<feature type="region of interest" description="Disordered" evidence="1">
    <location>
        <begin position="16"/>
        <end position="100"/>
    </location>
</feature>
<feature type="compositionally biased region" description="Polar residues" evidence="1">
    <location>
        <begin position="20"/>
        <end position="35"/>
    </location>
</feature>
<feature type="compositionally biased region" description="Acidic residues" evidence="1">
    <location>
        <begin position="53"/>
        <end position="69"/>
    </location>
</feature>
<feature type="compositionally biased region" description="Low complexity" evidence="1">
    <location>
        <begin position="84"/>
        <end position="93"/>
    </location>
</feature>
<feature type="modified residue" description="Phosphoserine" evidence="3">
    <location>
        <position position="204"/>
    </location>
</feature>
<feature type="modified residue" description="Phosphoserine" evidence="3">
    <location>
        <position position="264"/>
    </location>
</feature>
<feature type="sequence conflict" description="In Ref. 1; AAF26736." evidence="4" ref="1">
    <original>H</original>
    <variation>Q</variation>
    <location>
        <position position="63"/>
    </location>
</feature>
<gene>
    <name evidence="5" type="primary">tant</name>
    <name evidence="5" type="synonym">tan</name>
    <name evidence="5" type="ORF">CG6586</name>
</gene>
<organism>
    <name type="scientific">Drosophila melanogaster</name>
    <name type="common">Fruit fly</name>
    <dbReference type="NCBI Taxonomy" id="7227"/>
    <lineage>
        <taxon>Eukaryota</taxon>
        <taxon>Metazoa</taxon>
        <taxon>Ecdysozoa</taxon>
        <taxon>Arthropoda</taxon>
        <taxon>Hexapoda</taxon>
        <taxon>Insecta</taxon>
        <taxon>Pterygota</taxon>
        <taxon>Neoptera</taxon>
        <taxon>Endopterygota</taxon>
        <taxon>Diptera</taxon>
        <taxon>Brachycera</taxon>
        <taxon>Muscomorpha</taxon>
        <taxon>Ephydroidea</taxon>
        <taxon>Drosophilidae</taxon>
        <taxon>Drosophila</taxon>
        <taxon>Sophophora</taxon>
    </lineage>
</organism>
<dbReference type="EMBL" id="AF218585">
    <property type="protein sequence ID" value="AAF26736.1"/>
    <property type="molecule type" value="Genomic_DNA"/>
</dbReference>
<dbReference type="EMBL" id="AE014296">
    <property type="protein sequence ID" value="AAF50710.2"/>
    <property type="molecule type" value="Genomic_DNA"/>
</dbReference>
<dbReference type="EMBL" id="AY069394">
    <property type="protein sequence ID" value="AAL39539.1"/>
    <property type="molecule type" value="mRNA"/>
</dbReference>
<dbReference type="RefSeq" id="NP_001261460.1">
    <property type="nucleotide sequence ID" value="NM_001274531.1"/>
</dbReference>
<dbReference type="RefSeq" id="NP_524782.2">
    <property type="nucleotide sequence ID" value="NM_080043.3"/>
</dbReference>
<dbReference type="BioGRID" id="69276">
    <property type="interactions" value="5"/>
</dbReference>
<dbReference type="FunCoup" id="Q8T0D4">
    <property type="interactions" value="437"/>
</dbReference>
<dbReference type="IntAct" id="Q8T0D4">
    <property type="interactions" value="5"/>
</dbReference>
<dbReference type="STRING" id="7227.FBpp0305582"/>
<dbReference type="iPTMnet" id="Q8T0D4"/>
<dbReference type="PaxDb" id="7227-FBpp0305582"/>
<dbReference type="DNASU" id="44785"/>
<dbReference type="EnsemblMetazoa" id="FBtr0077043">
    <property type="protein sequence ID" value="FBpp0076751"/>
    <property type="gene ID" value="FBgn0028980"/>
</dbReference>
<dbReference type="EnsemblMetazoa" id="FBtr0333390">
    <property type="protein sequence ID" value="FBpp0305582"/>
    <property type="gene ID" value="FBgn0028980"/>
</dbReference>
<dbReference type="GeneID" id="44785"/>
<dbReference type="KEGG" id="dme:Dmel_CG6586"/>
<dbReference type="UCSC" id="CG6586-RA">
    <property type="organism name" value="d. melanogaster"/>
</dbReference>
<dbReference type="AGR" id="FB:FBgn0028980"/>
<dbReference type="CTD" id="44785"/>
<dbReference type="FlyBase" id="FBgn0028980">
    <property type="gene designation" value="tant"/>
</dbReference>
<dbReference type="VEuPathDB" id="VectorBase:FBgn0028980"/>
<dbReference type="eggNOG" id="ENOG502TBX4">
    <property type="taxonomic scope" value="Eukaryota"/>
</dbReference>
<dbReference type="HOGENOM" id="CLU_081405_0_0_1"/>
<dbReference type="InParanoid" id="Q8T0D4"/>
<dbReference type="OMA" id="KEMAMSD"/>
<dbReference type="OrthoDB" id="8035741at2759"/>
<dbReference type="PhylomeDB" id="Q8T0D4"/>
<dbReference type="SignaLink" id="Q8T0D4"/>
<dbReference type="BioGRID-ORCS" id="44785">
    <property type="hits" value="0 hits in 1 CRISPR screen"/>
</dbReference>
<dbReference type="GenomeRNAi" id="44785"/>
<dbReference type="PRO" id="PR:Q8T0D4"/>
<dbReference type="Proteomes" id="UP000000803">
    <property type="component" value="Chromosome 3L"/>
</dbReference>
<dbReference type="Bgee" id="FBgn0028980">
    <property type="expression patterns" value="Expressed in early elongation stage spermatid (Drosophila) in testis and 116 other cell types or tissues"/>
</dbReference>
<dbReference type="ExpressionAtlas" id="Q8T0D4">
    <property type="expression patterns" value="baseline and differential"/>
</dbReference>
<dbReference type="GO" id="GO:0005694">
    <property type="term" value="C:chromosome"/>
    <property type="evidence" value="ECO:0007669"/>
    <property type="project" value="UniProtKB-SubCell"/>
</dbReference>
<dbReference type="GO" id="GO:0005737">
    <property type="term" value="C:cytoplasm"/>
    <property type="evidence" value="ECO:0000314"/>
    <property type="project" value="UniProtKB"/>
</dbReference>
<dbReference type="GO" id="GO:0005634">
    <property type="term" value="C:nucleus"/>
    <property type="evidence" value="ECO:0000314"/>
    <property type="project" value="UniProtKB"/>
</dbReference>
<dbReference type="GO" id="GO:0003677">
    <property type="term" value="F:DNA binding"/>
    <property type="evidence" value="ECO:0007669"/>
    <property type="project" value="UniProtKB-KW"/>
</dbReference>
<dbReference type="GO" id="GO:0007423">
    <property type="term" value="P:sensory organ development"/>
    <property type="evidence" value="ECO:0000315"/>
    <property type="project" value="UniProtKB"/>
</dbReference>
<dbReference type="InterPro" id="IPR028149">
    <property type="entry name" value="Tantalus-like"/>
</dbReference>
<dbReference type="Pfam" id="PF15386">
    <property type="entry name" value="Tantalus"/>
    <property type="match status" value="1"/>
</dbReference>
<reference key="1">
    <citation type="journal article" date="2001" name="Dev. Biol.">
        <title>Tantalus, a novel ASX-interacting protein with tissue-specific functions.</title>
        <authorList>
            <person name="Dietrich B.H."/>
            <person name="Moore J."/>
            <person name="Kyba M."/>
            <person name="dosSantos G."/>
            <person name="McCloskey F."/>
            <person name="Milne T.A."/>
            <person name="Brock H.W."/>
            <person name="Krause H.M."/>
        </authorList>
    </citation>
    <scope>NUCLEOTIDE SEQUENCE [GENOMIC DNA]</scope>
    <scope>FUNCTION</scope>
    <scope>SUBCELLULAR LOCATION</scope>
    <scope>TISSUE SPECIFICITY</scope>
    <scope>DEVELOPMENTAL STAGE</scope>
    <scope>INTERACTION WITH ASX</scope>
    <source>
        <tissue>Embryo</tissue>
    </source>
</reference>
<reference key="2">
    <citation type="journal article" date="2000" name="Science">
        <title>The genome sequence of Drosophila melanogaster.</title>
        <authorList>
            <person name="Adams M.D."/>
            <person name="Celniker S.E."/>
            <person name="Holt R.A."/>
            <person name="Evans C.A."/>
            <person name="Gocayne J.D."/>
            <person name="Amanatides P.G."/>
            <person name="Scherer S.E."/>
            <person name="Li P.W."/>
            <person name="Hoskins R.A."/>
            <person name="Galle R.F."/>
            <person name="George R.A."/>
            <person name="Lewis S.E."/>
            <person name="Richards S."/>
            <person name="Ashburner M."/>
            <person name="Henderson S.N."/>
            <person name="Sutton G.G."/>
            <person name="Wortman J.R."/>
            <person name="Yandell M.D."/>
            <person name="Zhang Q."/>
            <person name="Chen L.X."/>
            <person name="Brandon R.C."/>
            <person name="Rogers Y.-H.C."/>
            <person name="Blazej R.G."/>
            <person name="Champe M."/>
            <person name="Pfeiffer B.D."/>
            <person name="Wan K.H."/>
            <person name="Doyle C."/>
            <person name="Baxter E.G."/>
            <person name="Helt G."/>
            <person name="Nelson C.R."/>
            <person name="Miklos G.L.G."/>
            <person name="Abril J.F."/>
            <person name="Agbayani A."/>
            <person name="An H.-J."/>
            <person name="Andrews-Pfannkoch C."/>
            <person name="Baldwin D."/>
            <person name="Ballew R.M."/>
            <person name="Basu A."/>
            <person name="Baxendale J."/>
            <person name="Bayraktaroglu L."/>
            <person name="Beasley E.M."/>
            <person name="Beeson K.Y."/>
            <person name="Benos P.V."/>
            <person name="Berman B.P."/>
            <person name="Bhandari D."/>
            <person name="Bolshakov S."/>
            <person name="Borkova D."/>
            <person name="Botchan M.R."/>
            <person name="Bouck J."/>
            <person name="Brokstein P."/>
            <person name="Brottier P."/>
            <person name="Burtis K.C."/>
            <person name="Busam D.A."/>
            <person name="Butler H."/>
            <person name="Cadieu E."/>
            <person name="Center A."/>
            <person name="Chandra I."/>
            <person name="Cherry J.M."/>
            <person name="Cawley S."/>
            <person name="Dahlke C."/>
            <person name="Davenport L.B."/>
            <person name="Davies P."/>
            <person name="de Pablos B."/>
            <person name="Delcher A."/>
            <person name="Deng Z."/>
            <person name="Mays A.D."/>
            <person name="Dew I."/>
            <person name="Dietz S.M."/>
            <person name="Dodson K."/>
            <person name="Doup L.E."/>
            <person name="Downes M."/>
            <person name="Dugan-Rocha S."/>
            <person name="Dunkov B.C."/>
            <person name="Dunn P."/>
            <person name="Durbin K.J."/>
            <person name="Evangelista C.C."/>
            <person name="Ferraz C."/>
            <person name="Ferriera S."/>
            <person name="Fleischmann W."/>
            <person name="Fosler C."/>
            <person name="Gabrielian A.E."/>
            <person name="Garg N.S."/>
            <person name="Gelbart W.M."/>
            <person name="Glasser K."/>
            <person name="Glodek A."/>
            <person name="Gong F."/>
            <person name="Gorrell J.H."/>
            <person name="Gu Z."/>
            <person name="Guan P."/>
            <person name="Harris M."/>
            <person name="Harris N.L."/>
            <person name="Harvey D.A."/>
            <person name="Heiman T.J."/>
            <person name="Hernandez J.R."/>
            <person name="Houck J."/>
            <person name="Hostin D."/>
            <person name="Houston K.A."/>
            <person name="Howland T.J."/>
            <person name="Wei M.-H."/>
            <person name="Ibegwam C."/>
            <person name="Jalali M."/>
            <person name="Kalush F."/>
            <person name="Karpen G.H."/>
            <person name="Ke Z."/>
            <person name="Kennison J.A."/>
            <person name="Ketchum K.A."/>
            <person name="Kimmel B.E."/>
            <person name="Kodira C.D."/>
            <person name="Kraft C.L."/>
            <person name="Kravitz S."/>
            <person name="Kulp D."/>
            <person name="Lai Z."/>
            <person name="Lasko P."/>
            <person name="Lei Y."/>
            <person name="Levitsky A.A."/>
            <person name="Li J.H."/>
            <person name="Li Z."/>
            <person name="Liang Y."/>
            <person name="Lin X."/>
            <person name="Liu X."/>
            <person name="Mattei B."/>
            <person name="McIntosh T.C."/>
            <person name="McLeod M.P."/>
            <person name="McPherson D."/>
            <person name="Merkulov G."/>
            <person name="Milshina N.V."/>
            <person name="Mobarry C."/>
            <person name="Morris J."/>
            <person name="Moshrefi A."/>
            <person name="Mount S.M."/>
            <person name="Moy M."/>
            <person name="Murphy B."/>
            <person name="Murphy L."/>
            <person name="Muzny D.M."/>
            <person name="Nelson D.L."/>
            <person name="Nelson D.R."/>
            <person name="Nelson K.A."/>
            <person name="Nixon K."/>
            <person name="Nusskern D.R."/>
            <person name="Pacleb J.M."/>
            <person name="Palazzolo M."/>
            <person name="Pittman G.S."/>
            <person name="Pan S."/>
            <person name="Pollard J."/>
            <person name="Puri V."/>
            <person name="Reese M.G."/>
            <person name="Reinert K."/>
            <person name="Remington K."/>
            <person name="Saunders R.D.C."/>
            <person name="Scheeler F."/>
            <person name="Shen H."/>
            <person name="Shue B.C."/>
            <person name="Siden-Kiamos I."/>
            <person name="Simpson M."/>
            <person name="Skupski M.P."/>
            <person name="Smith T.J."/>
            <person name="Spier E."/>
            <person name="Spradling A.C."/>
            <person name="Stapleton M."/>
            <person name="Strong R."/>
            <person name="Sun E."/>
            <person name="Svirskas R."/>
            <person name="Tector C."/>
            <person name="Turner R."/>
            <person name="Venter E."/>
            <person name="Wang A.H."/>
            <person name="Wang X."/>
            <person name="Wang Z.-Y."/>
            <person name="Wassarman D.A."/>
            <person name="Weinstock G.M."/>
            <person name="Weissenbach J."/>
            <person name="Williams S.M."/>
            <person name="Woodage T."/>
            <person name="Worley K.C."/>
            <person name="Wu D."/>
            <person name="Yang S."/>
            <person name="Yao Q.A."/>
            <person name="Ye J."/>
            <person name="Yeh R.-F."/>
            <person name="Zaveri J.S."/>
            <person name="Zhan M."/>
            <person name="Zhang G."/>
            <person name="Zhao Q."/>
            <person name="Zheng L."/>
            <person name="Zheng X.H."/>
            <person name="Zhong F.N."/>
            <person name="Zhong W."/>
            <person name="Zhou X."/>
            <person name="Zhu S.C."/>
            <person name="Zhu X."/>
            <person name="Smith H.O."/>
            <person name="Gibbs R.A."/>
            <person name="Myers E.W."/>
            <person name="Rubin G.M."/>
            <person name="Venter J.C."/>
        </authorList>
    </citation>
    <scope>NUCLEOTIDE SEQUENCE [LARGE SCALE GENOMIC DNA]</scope>
    <source>
        <strain>Berkeley</strain>
    </source>
</reference>
<reference key="3">
    <citation type="journal article" date="2002" name="Genome Biol.">
        <title>Annotation of the Drosophila melanogaster euchromatic genome: a systematic review.</title>
        <authorList>
            <person name="Misra S."/>
            <person name="Crosby M.A."/>
            <person name="Mungall C.J."/>
            <person name="Matthews B.B."/>
            <person name="Campbell K.S."/>
            <person name="Hradecky P."/>
            <person name="Huang Y."/>
            <person name="Kaminker J.S."/>
            <person name="Millburn G.H."/>
            <person name="Prochnik S.E."/>
            <person name="Smith C.D."/>
            <person name="Tupy J.L."/>
            <person name="Whitfield E.J."/>
            <person name="Bayraktaroglu L."/>
            <person name="Berman B.P."/>
            <person name="Bettencourt B.R."/>
            <person name="Celniker S.E."/>
            <person name="de Grey A.D.N.J."/>
            <person name="Drysdale R.A."/>
            <person name="Harris N.L."/>
            <person name="Richter J."/>
            <person name="Russo S."/>
            <person name="Schroeder A.J."/>
            <person name="Shu S.Q."/>
            <person name="Stapleton M."/>
            <person name="Yamada C."/>
            <person name="Ashburner M."/>
            <person name="Gelbart W.M."/>
            <person name="Rubin G.M."/>
            <person name="Lewis S.E."/>
        </authorList>
    </citation>
    <scope>GENOME REANNOTATION</scope>
    <source>
        <strain>Berkeley</strain>
    </source>
</reference>
<reference key="4">
    <citation type="journal article" date="2002" name="Genome Biol.">
        <title>A Drosophila full-length cDNA resource.</title>
        <authorList>
            <person name="Stapleton M."/>
            <person name="Carlson J.W."/>
            <person name="Brokstein P."/>
            <person name="Yu C."/>
            <person name="Champe M."/>
            <person name="George R.A."/>
            <person name="Guarin H."/>
            <person name="Kronmiller B."/>
            <person name="Pacleb J.M."/>
            <person name="Park S."/>
            <person name="Wan K.H."/>
            <person name="Rubin G.M."/>
            <person name="Celniker S.E."/>
        </authorList>
    </citation>
    <scope>NUCLEOTIDE SEQUENCE [LARGE SCALE MRNA]</scope>
    <source>
        <strain>Berkeley</strain>
        <tissue>Embryo</tissue>
    </source>
</reference>
<reference key="5">
    <citation type="journal article" date="2008" name="J. Proteome Res.">
        <title>Phosphoproteome analysis of Drosophila melanogaster embryos.</title>
        <authorList>
            <person name="Zhai B."/>
            <person name="Villen J."/>
            <person name="Beausoleil S.A."/>
            <person name="Mintseris J."/>
            <person name="Gygi S.P."/>
        </authorList>
    </citation>
    <scope>PHOSPHORYLATION [LARGE SCALE ANALYSIS] AT SER-204 AND SER-264</scope>
    <scope>IDENTIFICATION BY MASS SPECTROMETRY</scope>
    <source>
        <tissue>Embryo</tissue>
    </source>
</reference>